<comment type="function">
    <text evidence="6">Glucosidase specifically involved in alkaloid biosynthesis leading to the accumulation of several alkaloids, including ajmaline, an important plant-derived pharmaceutical used in the therapy of heart disorders.</text>
</comment>
<comment type="catalytic activity">
    <reaction evidence="5">
        <text>3alpha(S)-strictosidine + H2O = strictosidine aglycone + D-glucose</text>
        <dbReference type="Rhea" id="RHEA:12917"/>
        <dbReference type="ChEBI" id="CHEBI:4167"/>
        <dbReference type="ChEBI" id="CHEBI:15377"/>
        <dbReference type="ChEBI" id="CHEBI:58012"/>
        <dbReference type="ChEBI" id="CHEBI:58193"/>
        <dbReference type="EC" id="3.2.1.105"/>
    </reaction>
    <physiologicalReaction direction="left-to-right" evidence="5">
        <dbReference type="Rhea" id="RHEA:12918"/>
    </physiologicalReaction>
</comment>
<comment type="biophysicochemical properties">
    <kinetics>
        <KM evidence="5">90 uM for strictosidine (at pH 5.7 and 30 degrees Celsius)</KM>
        <KM evidence="6">120 uM for strictosidine</KM>
        <text evidence="5">kcat is 9.8 sec(-1) with strictosidine as substrate (at pH 5.7 and 30 degrees Celsius).</text>
    </kinetics>
</comment>
<comment type="pathway">
    <text evidence="5 6 12">Alkaloid biosynthesis; ajmaline biosynthesis.</text>
</comment>
<comment type="tissue specificity">
    <text evidence="7">Mainly expressed, at low levels, in roots and, to a lower level, in leaves.</text>
</comment>
<comment type="biotechnology">
    <text evidence="9">Ajmaline is an anti-arrhythmic alkaloid commercially used as an efficient drug for the treatment of arrhythmic heart disorder.</text>
</comment>
<comment type="similarity">
    <text evidence="10">Belongs to the glycosyl hydrolase 1 family.</text>
</comment>
<keyword id="KW-0002">3D-structure</keyword>
<keyword id="KW-0017">Alkaloid metabolism</keyword>
<keyword id="KW-0326">Glycosidase</keyword>
<keyword id="KW-0378">Hydrolase</keyword>
<feature type="chain" id="PRO_0000418401" description="Strictosidine-O-beta-D-glucosidase">
    <location>
        <begin position="1"/>
        <end position="532"/>
    </location>
</feature>
<feature type="region of interest" description="Disordered" evidence="4">
    <location>
        <begin position="512"/>
        <end position="532"/>
    </location>
</feature>
<feature type="compositionally biased region" description="Basic and acidic residues" evidence="4">
    <location>
        <begin position="518"/>
        <end position="532"/>
    </location>
</feature>
<feature type="active site" description="Proton donor" evidence="1">
    <location>
        <position position="207"/>
    </location>
</feature>
<feature type="active site" description="Nucleophile" evidence="15">
    <location>
        <position position="416"/>
    </location>
</feature>
<feature type="binding site" evidence="11 14 15">
    <location>
        <position position="57"/>
    </location>
    <ligand>
        <name>a beta-D-glucoside</name>
        <dbReference type="ChEBI" id="CHEBI:22798"/>
    </ligand>
</feature>
<feature type="binding site" evidence="11 14">
    <location>
        <position position="161"/>
    </location>
    <ligand>
        <name>a beta-D-glucoside</name>
        <dbReference type="ChEBI" id="CHEBI:22798"/>
    </ligand>
</feature>
<feature type="binding site" evidence="11 14 15">
    <location>
        <begin position="206"/>
        <end position="207"/>
    </location>
    <ligand>
        <name>a beta-D-glucoside</name>
        <dbReference type="ChEBI" id="CHEBI:22798"/>
    </ligand>
</feature>
<feature type="binding site" evidence="2">
    <location>
        <position position="345"/>
    </location>
    <ligand>
        <name>a beta-D-glucoside</name>
        <dbReference type="ChEBI" id="CHEBI:22798"/>
    </ligand>
</feature>
<feature type="binding site" evidence="3">
    <location>
        <position position="416"/>
    </location>
    <ligand>
        <name>a beta-D-glucoside</name>
        <dbReference type="ChEBI" id="CHEBI:22798"/>
    </ligand>
</feature>
<feature type="binding site" evidence="11 14">
    <location>
        <position position="465"/>
    </location>
    <ligand>
        <name>a beta-D-glucoside</name>
        <dbReference type="ChEBI" id="CHEBI:22798"/>
    </ligand>
</feature>
<feature type="binding site" evidence="11 14 15">
    <location>
        <begin position="472"/>
        <end position="473"/>
    </location>
    <ligand>
        <name>a beta-D-glucoside</name>
        <dbReference type="ChEBI" id="CHEBI:22798"/>
    </ligand>
</feature>
<feature type="binding site" evidence="11 14">
    <location>
        <position position="481"/>
    </location>
    <ligand>
        <name>a beta-D-glucoside</name>
        <dbReference type="ChEBI" id="CHEBI:22798"/>
    </ligand>
</feature>
<feature type="site" description="Controls the gate shape and acceptance of substrates">
    <location>
        <position position="388"/>
    </location>
</feature>
<feature type="mutagenesis site" description="Loss of activity." evidence="5">
    <original>H</original>
    <variation>L</variation>
    <variation>N</variation>
    <location>
        <position position="161"/>
    </location>
</feature>
<feature type="mutagenesis site" description="Loss of activity." evidence="5">
    <original>E</original>
    <variation>D</variation>
    <variation>Q</variation>
    <location>
        <position position="207"/>
    </location>
</feature>
<feature type="mutagenesis site" description="Reduced affinity but increased activity." evidence="5">
    <original>F</original>
    <variation>T</variation>
    <location>
        <position position="373"/>
    </location>
</feature>
<feature type="mutagenesis site" description="Reduced affinity and activity." evidence="5">
    <original>G</original>
    <variation>S</variation>
    <location>
        <position position="386"/>
    </location>
</feature>
<feature type="mutagenesis site" description="Loss of activity and reduced affinity." evidence="5">
    <original>W</original>
    <variation>A</variation>
    <location>
        <position position="388"/>
    </location>
</feature>
<feature type="mutagenesis site" description="Loss of activity." evidence="5">
    <original>E</original>
    <variation>D</variation>
    <variation>Q</variation>
    <location>
        <position position="416"/>
    </location>
</feature>
<feature type="mutagenesis site" description="Reduced affinity." evidence="5">
    <original>Y</original>
    <variation>F</variation>
    <location>
        <position position="481"/>
    </location>
</feature>
<feature type="helix" evidence="17">
    <location>
        <begin position="40"/>
        <end position="42"/>
    </location>
</feature>
<feature type="strand" evidence="17">
    <location>
        <begin position="48"/>
        <end position="52"/>
    </location>
</feature>
<feature type="helix" evidence="17">
    <location>
        <begin position="55"/>
        <end position="58"/>
    </location>
</feature>
<feature type="helix" evidence="17">
    <location>
        <begin position="71"/>
        <end position="78"/>
    </location>
</feature>
<feature type="helix" evidence="17">
    <location>
        <begin position="80"/>
        <end position="82"/>
    </location>
</feature>
<feature type="strand" evidence="17">
    <location>
        <begin position="89"/>
        <end position="91"/>
    </location>
</feature>
<feature type="helix" evidence="17">
    <location>
        <begin position="95"/>
        <end position="109"/>
    </location>
</feature>
<feature type="strand" evidence="17">
    <location>
        <begin position="112"/>
        <end position="117"/>
    </location>
</feature>
<feature type="helix" evidence="17">
    <location>
        <begin position="120"/>
        <end position="123"/>
    </location>
</feature>
<feature type="strand" evidence="17">
    <location>
        <begin position="127"/>
        <end position="129"/>
    </location>
</feature>
<feature type="helix" evidence="17">
    <location>
        <begin position="135"/>
        <end position="150"/>
    </location>
</feature>
<feature type="strand" evidence="17">
    <location>
        <begin position="154"/>
        <end position="162"/>
    </location>
</feature>
<feature type="helix" evidence="17">
    <location>
        <begin position="166"/>
        <end position="172"/>
    </location>
</feature>
<feature type="helix" evidence="17">
    <location>
        <begin position="174"/>
        <end position="176"/>
    </location>
</feature>
<feature type="helix" evidence="17">
    <location>
        <begin position="180"/>
        <end position="195"/>
    </location>
</feature>
<feature type="helix" evidence="17">
    <location>
        <begin position="196"/>
        <end position="198"/>
    </location>
</feature>
<feature type="strand" evidence="17">
    <location>
        <begin position="200"/>
        <end position="206"/>
    </location>
</feature>
<feature type="helix" evidence="17">
    <location>
        <begin position="208"/>
        <end position="216"/>
    </location>
</feature>
<feature type="strand" evidence="18">
    <location>
        <begin position="230"/>
        <end position="232"/>
    </location>
</feature>
<feature type="turn" evidence="17">
    <location>
        <begin position="234"/>
        <end position="236"/>
    </location>
</feature>
<feature type="helix" evidence="17">
    <location>
        <begin position="237"/>
        <end position="259"/>
    </location>
</feature>
<feature type="helix" evidence="17">
    <location>
        <begin position="261"/>
        <end position="264"/>
    </location>
</feature>
<feature type="strand" evidence="17">
    <location>
        <begin position="267"/>
        <end position="273"/>
    </location>
</feature>
<feature type="strand" evidence="17">
    <location>
        <begin position="276"/>
        <end position="283"/>
    </location>
</feature>
<feature type="helix" evidence="17">
    <location>
        <begin position="284"/>
        <end position="297"/>
    </location>
</feature>
<feature type="helix" evidence="17">
    <location>
        <begin position="299"/>
        <end position="302"/>
    </location>
</feature>
<feature type="helix" evidence="17">
    <location>
        <begin position="304"/>
        <end position="307"/>
    </location>
</feature>
<feature type="helix" evidence="17">
    <location>
        <begin position="312"/>
        <end position="318"/>
    </location>
</feature>
<feature type="helix" evidence="17">
    <location>
        <begin position="319"/>
        <end position="321"/>
    </location>
</feature>
<feature type="helix" evidence="17">
    <location>
        <begin position="327"/>
        <end position="333"/>
    </location>
</feature>
<feature type="strand" evidence="17">
    <location>
        <begin position="340"/>
        <end position="343"/>
    </location>
</feature>
<feature type="strand" evidence="17">
    <location>
        <begin position="347"/>
        <end position="352"/>
    </location>
</feature>
<feature type="helix" evidence="17">
    <location>
        <begin position="363"/>
        <end position="366"/>
    </location>
</feature>
<feature type="strand" evidence="17">
    <location>
        <begin position="369"/>
        <end position="377"/>
    </location>
</feature>
<feature type="strand" evidence="17">
    <location>
        <begin position="379"/>
        <end position="383"/>
    </location>
</feature>
<feature type="helix" evidence="17">
    <location>
        <begin position="393"/>
        <end position="407"/>
    </location>
</feature>
<feature type="strand" evidence="17">
    <location>
        <begin position="412"/>
        <end position="417"/>
    </location>
</feature>
<feature type="strand" evidence="16">
    <location>
        <begin position="425"/>
        <end position="427"/>
    </location>
</feature>
<feature type="helix" evidence="17">
    <location>
        <begin position="429"/>
        <end position="432"/>
    </location>
</feature>
<feature type="helix" evidence="17">
    <location>
        <begin position="436"/>
        <end position="454"/>
    </location>
</feature>
<feature type="strand" evidence="17">
    <location>
        <begin position="459"/>
        <end position="465"/>
    </location>
</feature>
<feature type="helix" evidence="17">
    <location>
        <begin position="473"/>
        <end position="475"/>
    </location>
</feature>
<feature type="strand" evidence="17">
    <location>
        <begin position="478"/>
        <end position="480"/>
    </location>
</feature>
<feature type="strand" evidence="17">
    <location>
        <begin position="483"/>
        <end position="486"/>
    </location>
</feature>
<feature type="turn" evidence="17">
    <location>
        <begin position="488"/>
        <end position="490"/>
    </location>
</feature>
<feature type="strand" evidence="17">
    <location>
        <begin position="493"/>
        <end position="495"/>
    </location>
</feature>
<feature type="helix" evidence="17">
    <location>
        <begin position="497"/>
        <end position="507"/>
    </location>
</feature>
<gene>
    <name evidence="13" type="primary">SGR1</name>
    <name evidence="8" type="synonym">SG</name>
    <name evidence="9" type="synonym">SGD</name>
</gene>
<sequence>MDNTQAEPLVVAIVPKPNASTEHTNSHLIPVTRSKIVVHRRDFPQDFIFGAGGSAYQCEGAYNEGNRGPSIWDTFTQRSPAKISDGSNGNQAINCYHMYKEDIKIMKQTGLESYRFSISWSRVLPGGRLAAGVNKDGVKFYHDFIDELLANGIKPSVTLFHWDLPQALEDEYGGFLSHRIVDDFCEYAEFCFWEFGDKIKYWTTFNEPHTFAVNGYALGEFAPGRGGKGDEGDPAIEPYVVTHNILLAHKAAVEEYRNKFQKCQEGEIGIVLNSMWMEPLSDVQADIDAQKRALDFMLGWFLEPLTTGDYPKSMRELVKGRLPKFSADDSEKLKGCYDFIGMNYYTATYVTNAVKSNSEKLSYETDDQVTKTFERNQKPIGHALYGGWQHVVPWGLYKLLVYTKETYHVPVLYVTESGMVEENKTKILLSEARRDAERTDYHQKHLASVRDAIDDGVNVKGYFVWSFFDNFEWNLGYICRYGIIHVDYKSFERYPKESAIWYKNFIAGKSTTSPAKRRREEAQVELVKRQKT</sequence>
<accession>Q8GU20</accession>
<proteinExistence type="evidence at protein level"/>
<dbReference type="EC" id="3.2.1.105" evidence="5"/>
<dbReference type="EMBL" id="AJ302044">
    <property type="protein sequence ID" value="CAC83098.1"/>
    <property type="molecule type" value="mRNA"/>
</dbReference>
<dbReference type="PDB" id="2JF6">
    <property type="method" value="X-ray"/>
    <property type="resolution" value="2.82 A"/>
    <property type="chains" value="A/B=1-532"/>
</dbReference>
<dbReference type="PDB" id="2JF7">
    <property type="method" value="X-ray"/>
    <property type="resolution" value="2.48 A"/>
    <property type="chains" value="A/B=1-532"/>
</dbReference>
<dbReference type="PDB" id="3ZJ7">
    <property type="method" value="X-ray"/>
    <property type="resolution" value="2.50 A"/>
    <property type="chains" value="A/B=1-532"/>
</dbReference>
<dbReference type="PDB" id="3ZJ8">
    <property type="method" value="X-ray"/>
    <property type="resolution" value="3.01 A"/>
    <property type="chains" value="A/B=1-532"/>
</dbReference>
<dbReference type="PDBsum" id="2JF6"/>
<dbReference type="PDBsum" id="2JF7"/>
<dbReference type="PDBsum" id="3ZJ7"/>
<dbReference type="PDBsum" id="3ZJ8"/>
<dbReference type="SMR" id="Q8GU20"/>
<dbReference type="CAZy" id="GH1">
    <property type="family name" value="Glycoside Hydrolase Family 1"/>
</dbReference>
<dbReference type="KEGG" id="ag:CAC83098"/>
<dbReference type="BioCyc" id="MetaCyc:MONOMER-12391"/>
<dbReference type="BRENDA" id="3.2.1.105">
    <property type="organism ID" value="5309"/>
</dbReference>
<dbReference type="UniPathway" id="UPA00310"/>
<dbReference type="EvolutionaryTrace" id="Q8GU20"/>
<dbReference type="GO" id="GO:0050422">
    <property type="term" value="F:strictosidine beta-glucosidase activity"/>
    <property type="evidence" value="ECO:0000314"/>
    <property type="project" value="UniProtKB"/>
</dbReference>
<dbReference type="GO" id="GO:0009821">
    <property type="term" value="P:alkaloid biosynthetic process"/>
    <property type="evidence" value="ECO:0000314"/>
    <property type="project" value="UniProtKB"/>
</dbReference>
<dbReference type="GO" id="GO:0005975">
    <property type="term" value="P:carbohydrate metabolic process"/>
    <property type="evidence" value="ECO:0007669"/>
    <property type="project" value="InterPro"/>
</dbReference>
<dbReference type="FunFam" id="3.20.20.80:FF:000022">
    <property type="entry name" value="Beta-glucosidase 11"/>
    <property type="match status" value="1"/>
</dbReference>
<dbReference type="Gene3D" id="3.20.20.80">
    <property type="entry name" value="Glycosidases"/>
    <property type="match status" value="1"/>
</dbReference>
<dbReference type="InterPro" id="IPR001360">
    <property type="entry name" value="Glyco_hydro_1"/>
</dbReference>
<dbReference type="InterPro" id="IPR033132">
    <property type="entry name" value="Glyco_hydro_1_N_CS"/>
</dbReference>
<dbReference type="InterPro" id="IPR017853">
    <property type="entry name" value="Glycoside_hydrolase_SF"/>
</dbReference>
<dbReference type="PANTHER" id="PTHR10353">
    <property type="entry name" value="GLYCOSYL HYDROLASE"/>
    <property type="match status" value="1"/>
</dbReference>
<dbReference type="PANTHER" id="PTHR10353:SF137">
    <property type="entry name" value="MYROSINASE 3-RELATED"/>
    <property type="match status" value="1"/>
</dbReference>
<dbReference type="Pfam" id="PF00232">
    <property type="entry name" value="Glyco_hydro_1"/>
    <property type="match status" value="1"/>
</dbReference>
<dbReference type="PRINTS" id="PR00131">
    <property type="entry name" value="GLHYDRLASE1"/>
</dbReference>
<dbReference type="SUPFAM" id="SSF51445">
    <property type="entry name" value="(Trans)glycosidases"/>
    <property type="match status" value="1"/>
</dbReference>
<dbReference type="PROSITE" id="PS00653">
    <property type="entry name" value="GLYCOSYL_HYDROL_F1_2"/>
    <property type="match status" value="1"/>
</dbReference>
<name>SG1_RAUSE</name>
<reference key="1">
    <citation type="submission" date="2000-12" db="EMBL/GenBank/DDBJ databases">
        <title>Molecular cloning and functional bacterial expression of strictosidine glucosidase from Rauvolfia serpentina cell suspension cultures.</title>
        <authorList>
            <person name="Gerasimenko I."/>
            <person name="Sheludko Y."/>
            <person name="Stoeckigt J."/>
        </authorList>
    </citation>
    <scope>NUCLEOTIDE SEQUENCE [MRNA]</scope>
    <source>
        <tissue>Protoplast</tissue>
    </source>
</reference>
<reference key="2">
    <citation type="journal article" date="2012" name="ACS Chem. Biol.">
        <title>Structures of alkaloid biosynthetic glucosidases decode substrate specificity.</title>
        <authorList>
            <person name="Xia L."/>
            <person name="Ruppert M."/>
            <person name="Wang M."/>
            <person name="Panjikar S."/>
            <person name="Lin H."/>
            <person name="Rajendran C."/>
            <person name="Barleben L."/>
            <person name="Stoeckigt J."/>
        </authorList>
    </citation>
    <scope>FUNCTION</scope>
    <scope>BIOPHYSICOCHEMICAL PROPERTIES</scope>
    <scope>PATHWAY</scope>
</reference>
<reference key="3">
    <citation type="journal article" date="2024" name="Nat. Commun.">
        <title>De novo biosynthesis of antiarrhythmic alkaloid ajmaline.</title>
        <authorList>
            <person name="Guo J."/>
            <person name="Gao D."/>
            <person name="Lian J."/>
            <person name="Qu Y."/>
        </authorList>
    </citation>
    <scope>BIOTECHNOLOGY</scope>
    <scope>TISSUE SPECIFICITY</scope>
    <scope>PATHWAY</scope>
</reference>
<reference key="4">
    <citation type="journal article" date="2007" name="Plant Cell">
        <title>Molecular architecture of strictosidine glucosidase: the gateway to the biosynthesis of the monoterpenoid indole alkaloid family.</title>
        <authorList>
            <person name="Barleben L."/>
            <person name="Panjikar S."/>
            <person name="Ruppert M."/>
            <person name="Koepke J."/>
            <person name="Stoeckigt J."/>
        </authorList>
    </citation>
    <scope>X-RAY CRYSTALLOGRAPHY (2.48 ANGSTROMS) IN COMPLEX WITH SUBSTRATE</scope>
    <scope>MUTAGENESIS OF HIS-161; GLU-207; PHE-373; GLY-386; TRP-388; GLU-416 AND TYR-481</scope>
    <scope>CATALYTIC ACTIVITY</scope>
    <scope>BIOPHYSICOCHEMICAL PROPERTIES</scope>
    <scope>PATHWAY</scope>
</reference>
<protein>
    <recommendedName>
        <fullName evidence="8 9">Strictosidine-O-beta-D-glucosidase</fullName>
        <ecNumber evidence="5">3.2.1.105</ecNumber>
    </recommendedName>
</protein>
<evidence type="ECO:0000250" key="1">
    <source>
        <dbReference type="UniProtKB" id="Q7XSK0"/>
    </source>
</evidence>
<evidence type="ECO:0000250" key="2">
    <source>
        <dbReference type="UniProtKB" id="Q8L7J2"/>
    </source>
</evidence>
<evidence type="ECO:0000250" key="3">
    <source>
        <dbReference type="UniProtKB" id="Q9SPP9"/>
    </source>
</evidence>
<evidence type="ECO:0000256" key="4">
    <source>
        <dbReference type="SAM" id="MobiDB-lite"/>
    </source>
</evidence>
<evidence type="ECO:0000269" key="5">
    <source>
    </source>
</evidence>
<evidence type="ECO:0000269" key="6">
    <source>
    </source>
</evidence>
<evidence type="ECO:0000269" key="7">
    <source>
    </source>
</evidence>
<evidence type="ECO:0000303" key="8">
    <source>
    </source>
</evidence>
<evidence type="ECO:0000303" key="9">
    <source>
    </source>
</evidence>
<evidence type="ECO:0000305" key="10"/>
<evidence type="ECO:0000305" key="11">
    <source>
    </source>
</evidence>
<evidence type="ECO:0000305" key="12">
    <source>
    </source>
</evidence>
<evidence type="ECO:0000312" key="13">
    <source>
        <dbReference type="EMBL" id="CAC83098.1"/>
    </source>
</evidence>
<evidence type="ECO:0007744" key="14">
    <source>
        <dbReference type="PDB" id="2JF6"/>
    </source>
</evidence>
<evidence type="ECO:0007744" key="15">
    <source>
        <dbReference type="PDB" id="3ZJ8"/>
    </source>
</evidence>
<evidence type="ECO:0007829" key="16">
    <source>
        <dbReference type="PDB" id="2JF6"/>
    </source>
</evidence>
<evidence type="ECO:0007829" key="17">
    <source>
        <dbReference type="PDB" id="2JF7"/>
    </source>
</evidence>
<evidence type="ECO:0007829" key="18">
    <source>
        <dbReference type="PDB" id="3ZJ7"/>
    </source>
</evidence>
<organism>
    <name type="scientific">Rauvolfia serpentina</name>
    <name type="common">Serpentine wood</name>
    <name type="synonym">Ophioxylon serpentinum</name>
    <dbReference type="NCBI Taxonomy" id="4060"/>
    <lineage>
        <taxon>Eukaryota</taxon>
        <taxon>Viridiplantae</taxon>
        <taxon>Streptophyta</taxon>
        <taxon>Embryophyta</taxon>
        <taxon>Tracheophyta</taxon>
        <taxon>Spermatophyta</taxon>
        <taxon>Magnoliopsida</taxon>
        <taxon>eudicotyledons</taxon>
        <taxon>Gunneridae</taxon>
        <taxon>Pentapetalae</taxon>
        <taxon>asterids</taxon>
        <taxon>lamiids</taxon>
        <taxon>Gentianales</taxon>
        <taxon>Apocynaceae</taxon>
        <taxon>Rauvolfioideae</taxon>
        <taxon>Vinceae</taxon>
        <taxon>Rauvolfiinae</taxon>
        <taxon>Rauvolfia</taxon>
    </lineage>
</organism>